<accession>Q042T7</accession>
<name>CLPX_LACGA</name>
<evidence type="ECO:0000255" key="1">
    <source>
        <dbReference type="HAMAP-Rule" id="MF_00175"/>
    </source>
</evidence>
<evidence type="ECO:0000255" key="2">
    <source>
        <dbReference type="PROSITE-ProRule" id="PRU01250"/>
    </source>
</evidence>
<reference key="1">
    <citation type="journal article" date="2006" name="Proc. Natl. Acad. Sci. U.S.A.">
        <title>Comparative genomics of the lactic acid bacteria.</title>
        <authorList>
            <person name="Makarova K.S."/>
            <person name="Slesarev A."/>
            <person name="Wolf Y.I."/>
            <person name="Sorokin A."/>
            <person name="Mirkin B."/>
            <person name="Koonin E.V."/>
            <person name="Pavlov A."/>
            <person name="Pavlova N."/>
            <person name="Karamychev V."/>
            <person name="Polouchine N."/>
            <person name="Shakhova V."/>
            <person name="Grigoriev I."/>
            <person name="Lou Y."/>
            <person name="Rohksar D."/>
            <person name="Lucas S."/>
            <person name="Huang K."/>
            <person name="Goodstein D.M."/>
            <person name="Hawkins T."/>
            <person name="Plengvidhya V."/>
            <person name="Welker D."/>
            <person name="Hughes J."/>
            <person name="Goh Y."/>
            <person name="Benson A."/>
            <person name="Baldwin K."/>
            <person name="Lee J.-H."/>
            <person name="Diaz-Muniz I."/>
            <person name="Dosti B."/>
            <person name="Smeianov V."/>
            <person name="Wechter W."/>
            <person name="Barabote R."/>
            <person name="Lorca G."/>
            <person name="Altermann E."/>
            <person name="Barrangou R."/>
            <person name="Ganesan B."/>
            <person name="Xie Y."/>
            <person name="Rawsthorne H."/>
            <person name="Tamir D."/>
            <person name="Parker C."/>
            <person name="Breidt F."/>
            <person name="Broadbent J.R."/>
            <person name="Hutkins R."/>
            <person name="O'Sullivan D."/>
            <person name="Steele J."/>
            <person name="Unlu G."/>
            <person name="Saier M.H. Jr."/>
            <person name="Klaenhammer T."/>
            <person name="Richardson P."/>
            <person name="Kozyavkin S."/>
            <person name="Weimer B.C."/>
            <person name="Mills D.A."/>
        </authorList>
    </citation>
    <scope>NUCLEOTIDE SEQUENCE [LARGE SCALE GENOMIC DNA]</scope>
    <source>
        <strain>ATCC 33323 / DSM 20243 / BCRC 14619 / CIP 102991 / JCM 1131 / KCTC 3163 / NCIMB 11718 / NCTC 13722 / AM63</strain>
    </source>
</reference>
<dbReference type="EMBL" id="CP000413">
    <property type="protein sequence ID" value="ABJ60535.1"/>
    <property type="molecule type" value="Genomic_DNA"/>
</dbReference>
<dbReference type="RefSeq" id="WP_003647140.1">
    <property type="nucleotide sequence ID" value="NZ_WBMG01000002.1"/>
</dbReference>
<dbReference type="SMR" id="Q042T7"/>
<dbReference type="GeneID" id="29639559"/>
<dbReference type="KEGG" id="lga:LGAS_1166"/>
<dbReference type="HOGENOM" id="CLU_014218_8_2_9"/>
<dbReference type="BioCyc" id="LGAS324831:G1G6Y-1162-MONOMER"/>
<dbReference type="Proteomes" id="UP000000664">
    <property type="component" value="Chromosome"/>
</dbReference>
<dbReference type="GO" id="GO:0009376">
    <property type="term" value="C:HslUV protease complex"/>
    <property type="evidence" value="ECO:0007669"/>
    <property type="project" value="TreeGrafter"/>
</dbReference>
<dbReference type="GO" id="GO:0005524">
    <property type="term" value="F:ATP binding"/>
    <property type="evidence" value="ECO:0007669"/>
    <property type="project" value="UniProtKB-UniRule"/>
</dbReference>
<dbReference type="GO" id="GO:0016887">
    <property type="term" value="F:ATP hydrolysis activity"/>
    <property type="evidence" value="ECO:0007669"/>
    <property type="project" value="InterPro"/>
</dbReference>
<dbReference type="GO" id="GO:0140662">
    <property type="term" value="F:ATP-dependent protein folding chaperone"/>
    <property type="evidence" value="ECO:0007669"/>
    <property type="project" value="InterPro"/>
</dbReference>
<dbReference type="GO" id="GO:0046983">
    <property type="term" value="F:protein dimerization activity"/>
    <property type="evidence" value="ECO:0007669"/>
    <property type="project" value="InterPro"/>
</dbReference>
<dbReference type="GO" id="GO:0051082">
    <property type="term" value="F:unfolded protein binding"/>
    <property type="evidence" value="ECO:0007669"/>
    <property type="project" value="UniProtKB-UniRule"/>
</dbReference>
<dbReference type="GO" id="GO:0008270">
    <property type="term" value="F:zinc ion binding"/>
    <property type="evidence" value="ECO:0007669"/>
    <property type="project" value="InterPro"/>
</dbReference>
<dbReference type="GO" id="GO:0051301">
    <property type="term" value="P:cell division"/>
    <property type="evidence" value="ECO:0007669"/>
    <property type="project" value="TreeGrafter"/>
</dbReference>
<dbReference type="GO" id="GO:0051603">
    <property type="term" value="P:proteolysis involved in protein catabolic process"/>
    <property type="evidence" value="ECO:0007669"/>
    <property type="project" value="TreeGrafter"/>
</dbReference>
<dbReference type="CDD" id="cd19497">
    <property type="entry name" value="RecA-like_ClpX"/>
    <property type="match status" value="1"/>
</dbReference>
<dbReference type="FunFam" id="1.10.8.60:FF:000002">
    <property type="entry name" value="ATP-dependent Clp protease ATP-binding subunit ClpX"/>
    <property type="match status" value="1"/>
</dbReference>
<dbReference type="FunFam" id="3.40.50.300:FF:000005">
    <property type="entry name" value="ATP-dependent Clp protease ATP-binding subunit ClpX"/>
    <property type="match status" value="1"/>
</dbReference>
<dbReference type="Gene3D" id="1.10.8.60">
    <property type="match status" value="1"/>
</dbReference>
<dbReference type="Gene3D" id="6.20.220.10">
    <property type="entry name" value="ClpX chaperone, C4-type zinc finger domain"/>
    <property type="match status" value="1"/>
</dbReference>
<dbReference type="Gene3D" id="3.40.50.300">
    <property type="entry name" value="P-loop containing nucleotide triphosphate hydrolases"/>
    <property type="match status" value="1"/>
</dbReference>
<dbReference type="HAMAP" id="MF_00175">
    <property type="entry name" value="ClpX"/>
    <property type="match status" value="1"/>
</dbReference>
<dbReference type="InterPro" id="IPR003593">
    <property type="entry name" value="AAA+_ATPase"/>
</dbReference>
<dbReference type="InterPro" id="IPR050052">
    <property type="entry name" value="ATP-dep_Clp_protease_ClpX"/>
</dbReference>
<dbReference type="InterPro" id="IPR003959">
    <property type="entry name" value="ATPase_AAA_core"/>
</dbReference>
<dbReference type="InterPro" id="IPR019489">
    <property type="entry name" value="Clp_ATPase_C"/>
</dbReference>
<dbReference type="InterPro" id="IPR004487">
    <property type="entry name" value="Clp_protease_ATP-bd_su_ClpX"/>
</dbReference>
<dbReference type="InterPro" id="IPR046425">
    <property type="entry name" value="ClpX_bact"/>
</dbReference>
<dbReference type="InterPro" id="IPR027417">
    <property type="entry name" value="P-loop_NTPase"/>
</dbReference>
<dbReference type="InterPro" id="IPR010603">
    <property type="entry name" value="Znf_CppX_C4"/>
</dbReference>
<dbReference type="InterPro" id="IPR038366">
    <property type="entry name" value="Znf_CppX_C4_sf"/>
</dbReference>
<dbReference type="NCBIfam" id="TIGR00382">
    <property type="entry name" value="clpX"/>
    <property type="match status" value="1"/>
</dbReference>
<dbReference type="NCBIfam" id="NF003745">
    <property type="entry name" value="PRK05342.1"/>
    <property type="match status" value="1"/>
</dbReference>
<dbReference type="PANTHER" id="PTHR48102:SF7">
    <property type="entry name" value="ATP-DEPENDENT CLP PROTEASE ATP-BINDING SUBUNIT CLPX-LIKE, MITOCHONDRIAL"/>
    <property type="match status" value="1"/>
</dbReference>
<dbReference type="PANTHER" id="PTHR48102">
    <property type="entry name" value="ATP-DEPENDENT CLP PROTEASE ATP-BINDING SUBUNIT CLPX-LIKE, MITOCHONDRIAL-RELATED"/>
    <property type="match status" value="1"/>
</dbReference>
<dbReference type="Pfam" id="PF07724">
    <property type="entry name" value="AAA_2"/>
    <property type="match status" value="1"/>
</dbReference>
<dbReference type="Pfam" id="PF10431">
    <property type="entry name" value="ClpB_D2-small"/>
    <property type="match status" value="1"/>
</dbReference>
<dbReference type="Pfam" id="PF06689">
    <property type="entry name" value="zf-C4_ClpX"/>
    <property type="match status" value="1"/>
</dbReference>
<dbReference type="SMART" id="SM00382">
    <property type="entry name" value="AAA"/>
    <property type="match status" value="1"/>
</dbReference>
<dbReference type="SMART" id="SM01086">
    <property type="entry name" value="ClpB_D2-small"/>
    <property type="match status" value="1"/>
</dbReference>
<dbReference type="SMART" id="SM00994">
    <property type="entry name" value="zf-C4_ClpX"/>
    <property type="match status" value="1"/>
</dbReference>
<dbReference type="SUPFAM" id="SSF57716">
    <property type="entry name" value="Glucocorticoid receptor-like (DNA-binding domain)"/>
    <property type="match status" value="1"/>
</dbReference>
<dbReference type="SUPFAM" id="SSF52540">
    <property type="entry name" value="P-loop containing nucleoside triphosphate hydrolases"/>
    <property type="match status" value="1"/>
</dbReference>
<dbReference type="PROSITE" id="PS51902">
    <property type="entry name" value="CLPX_ZB"/>
    <property type="match status" value="1"/>
</dbReference>
<keyword id="KW-0067">ATP-binding</keyword>
<keyword id="KW-0143">Chaperone</keyword>
<keyword id="KW-0479">Metal-binding</keyword>
<keyword id="KW-0547">Nucleotide-binding</keyword>
<keyword id="KW-0862">Zinc</keyword>
<organism>
    <name type="scientific">Lactobacillus gasseri (strain ATCC 33323 / DSM 20243 / BCRC 14619 / CIP 102991 / JCM 1131 / KCTC 3163 / NCIMB 11718 / NCTC 13722 / AM63)</name>
    <dbReference type="NCBI Taxonomy" id="324831"/>
    <lineage>
        <taxon>Bacteria</taxon>
        <taxon>Bacillati</taxon>
        <taxon>Bacillota</taxon>
        <taxon>Bacilli</taxon>
        <taxon>Lactobacillales</taxon>
        <taxon>Lactobacillaceae</taxon>
        <taxon>Lactobacillus</taxon>
    </lineage>
</organism>
<sequence>MANEITEQEEVKCSFCGKPQSQVKKIVAGNGVYICNECIDLSKKIIDDELKADSIKETKDLPKPMEIKKQLDEYVIGQDRAKKVLSVAVYNHYKRISQMDIDSSGTELQKSNIALIGPTGSGKTYLAQTLAKILNVPFAIADATTLTEAGYVGEDVENILLKLLQNADYDLERAQRGIIYIDEIDKISKKAENVSITRDVSGEGVQQSLLKILEGTIASVPPQGGRKHPQQQMIKIDTTNILFIVGGAFDGIENIVKNRLGKKTIGFGAENGLNQVDADDWQKNLTTGDLVKFGLIPEFIGRIPIITTLDKLSTKDLIRILTEPKNALVKQYKKLLSLDNVDLEFTEGALKAIADMAISRHMGARGLRSIVENSLMDVMYRTPSEDNIEKVEITKDVITKHAQPKITYKENESQEASEAAK</sequence>
<protein>
    <recommendedName>
        <fullName evidence="1">ATP-dependent Clp protease ATP-binding subunit ClpX</fullName>
    </recommendedName>
</protein>
<feature type="chain" id="PRO_1000024571" description="ATP-dependent Clp protease ATP-binding subunit ClpX">
    <location>
        <begin position="1"/>
        <end position="421"/>
    </location>
</feature>
<feature type="domain" description="ClpX-type ZB" evidence="2">
    <location>
        <begin position="1"/>
        <end position="54"/>
    </location>
</feature>
<feature type="binding site" evidence="2">
    <location>
        <position position="13"/>
    </location>
    <ligand>
        <name>Zn(2+)</name>
        <dbReference type="ChEBI" id="CHEBI:29105"/>
    </ligand>
</feature>
<feature type="binding site" evidence="2">
    <location>
        <position position="16"/>
    </location>
    <ligand>
        <name>Zn(2+)</name>
        <dbReference type="ChEBI" id="CHEBI:29105"/>
    </ligand>
</feature>
<feature type="binding site" evidence="2">
    <location>
        <position position="35"/>
    </location>
    <ligand>
        <name>Zn(2+)</name>
        <dbReference type="ChEBI" id="CHEBI:29105"/>
    </ligand>
</feature>
<feature type="binding site" evidence="2">
    <location>
        <position position="38"/>
    </location>
    <ligand>
        <name>Zn(2+)</name>
        <dbReference type="ChEBI" id="CHEBI:29105"/>
    </ligand>
</feature>
<feature type="binding site" evidence="1">
    <location>
        <begin position="118"/>
        <end position="125"/>
    </location>
    <ligand>
        <name>ATP</name>
        <dbReference type="ChEBI" id="CHEBI:30616"/>
    </ligand>
</feature>
<gene>
    <name evidence="1" type="primary">clpX</name>
    <name type="ordered locus">LGAS_1166</name>
</gene>
<comment type="function">
    <text evidence="1">ATP-dependent specificity component of the Clp protease. It directs the protease to specific substrates. Can perform chaperone functions in the absence of ClpP.</text>
</comment>
<comment type="subunit">
    <text evidence="1">Component of the ClpX-ClpP complex. Forms a hexameric ring that, in the presence of ATP, binds to fourteen ClpP subunits assembled into a disk-like structure with a central cavity, resembling the structure of eukaryotic proteasomes.</text>
</comment>
<comment type="similarity">
    <text evidence="1">Belongs to the ClpX chaperone family.</text>
</comment>
<proteinExistence type="inferred from homology"/>